<dbReference type="EC" id="3.4.24.-" evidence="2"/>
<dbReference type="EMBL" id="CABZ01042340">
    <property type="status" value="NOT_ANNOTATED_CDS"/>
    <property type="molecule type" value="Genomic_DNA"/>
</dbReference>
<dbReference type="RefSeq" id="NP_001410794.1">
    <property type="nucleotide sequence ID" value="NM_001423865.1"/>
</dbReference>
<dbReference type="RefSeq" id="XP_005173863.1">
    <property type="nucleotide sequence ID" value="XM_005173806.3"/>
</dbReference>
<dbReference type="SMR" id="A0A0G2L7I0"/>
<dbReference type="FunCoup" id="A0A0G2L7I0">
    <property type="interactions" value="829"/>
</dbReference>
<dbReference type="STRING" id="7955.ENSDARP00000140734"/>
<dbReference type="Ensembl" id="ENSDART00000158057">
    <property type="protein sequence ID" value="ENSDARP00000140734"/>
    <property type="gene ID" value="ENSDARG00000104709"/>
</dbReference>
<dbReference type="GeneID" id="101886162"/>
<dbReference type="AGR" id="ZFIN:ZDB-GENE-170317-1"/>
<dbReference type="ZFIN" id="ZDB-GENE-170317-1">
    <property type="gene designation" value="sprtn"/>
</dbReference>
<dbReference type="InParanoid" id="A0A0G2L7I0"/>
<dbReference type="OMA" id="PSSANCM"/>
<dbReference type="OrthoDB" id="5236983at2759"/>
<dbReference type="Reactome" id="R-DRE-110320">
    <property type="pathway name" value="Translesion Synthesis by POLH"/>
</dbReference>
<dbReference type="PRO" id="PR:A0A0G2L7I0"/>
<dbReference type="Proteomes" id="UP000000437">
    <property type="component" value="Chromosome 20"/>
</dbReference>
<dbReference type="Bgee" id="ENSDARG00000104709">
    <property type="expression patterns" value="Expressed in mature ovarian follicle and 25 other cell types or tissues"/>
</dbReference>
<dbReference type="GO" id="GO:0000785">
    <property type="term" value="C:chromatin"/>
    <property type="evidence" value="ECO:0000250"/>
    <property type="project" value="UniProtKB"/>
</dbReference>
<dbReference type="GO" id="GO:0005634">
    <property type="term" value="C:nucleus"/>
    <property type="evidence" value="ECO:0000250"/>
    <property type="project" value="UniProtKB"/>
</dbReference>
<dbReference type="GO" id="GO:0003690">
    <property type="term" value="F:double-stranded DNA binding"/>
    <property type="evidence" value="ECO:0000250"/>
    <property type="project" value="UniProtKB"/>
</dbReference>
<dbReference type="GO" id="GO:0004222">
    <property type="term" value="F:metalloendopeptidase activity"/>
    <property type="evidence" value="ECO:0000250"/>
    <property type="project" value="UniProtKB"/>
</dbReference>
<dbReference type="GO" id="GO:0031593">
    <property type="term" value="F:polyubiquitin modification-dependent protein binding"/>
    <property type="evidence" value="ECO:0000318"/>
    <property type="project" value="GO_Central"/>
</dbReference>
<dbReference type="GO" id="GO:0003697">
    <property type="term" value="F:single-stranded DNA binding"/>
    <property type="evidence" value="ECO:0000250"/>
    <property type="project" value="UniProtKB"/>
</dbReference>
<dbReference type="GO" id="GO:0008270">
    <property type="term" value="F:zinc ion binding"/>
    <property type="evidence" value="ECO:0007669"/>
    <property type="project" value="UniProtKB-KW"/>
</dbReference>
<dbReference type="GO" id="GO:0006974">
    <property type="term" value="P:DNA damage response"/>
    <property type="evidence" value="ECO:0000315"/>
    <property type="project" value="ZFIN"/>
</dbReference>
<dbReference type="GO" id="GO:0016540">
    <property type="term" value="P:protein autoprocessing"/>
    <property type="evidence" value="ECO:0000250"/>
    <property type="project" value="UniProtKB"/>
</dbReference>
<dbReference type="GO" id="GO:0106300">
    <property type="term" value="P:protein-DNA covalent cross-linking repair"/>
    <property type="evidence" value="ECO:0000250"/>
    <property type="project" value="UniProtKB"/>
</dbReference>
<dbReference type="GO" id="GO:0006508">
    <property type="term" value="P:proteolysis"/>
    <property type="evidence" value="ECO:0000250"/>
    <property type="project" value="UniProtKB"/>
</dbReference>
<dbReference type="Gene3D" id="3.30.160.60">
    <property type="entry name" value="Classic Zinc Finger"/>
    <property type="match status" value="1"/>
</dbReference>
<dbReference type="InterPro" id="IPR006642">
    <property type="entry name" value="Rad18_UBZ4"/>
</dbReference>
<dbReference type="InterPro" id="IPR044245">
    <property type="entry name" value="Spartan"/>
</dbReference>
<dbReference type="InterPro" id="IPR006640">
    <property type="entry name" value="SprT-like_domain"/>
</dbReference>
<dbReference type="InterPro" id="IPR055220">
    <property type="entry name" value="SPRTN_ZBD"/>
</dbReference>
<dbReference type="PANTHER" id="PTHR21220">
    <property type="entry name" value="DNA-DEPENDENT METALLOPROTEASE SPRTN"/>
    <property type="match status" value="1"/>
</dbReference>
<dbReference type="PANTHER" id="PTHR21220:SF0">
    <property type="entry name" value="DNA-DEPENDENT METALLOPROTEASE SPRTN"/>
    <property type="match status" value="1"/>
</dbReference>
<dbReference type="Pfam" id="PF10263">
    <property type="entry name" value="SprT-like"/>
    <property type="match status" value="1"/>
</dbReference>
<dbReference type="Pfam" id="PF22934">
    <property type="entry name" value="SPRTN_ZBD"/>
    <property type="match status" value="1"/>
</dbReference>
<dbReference type="SMART" id="SM00731">
    <property type="entry name" value="SprT"/>
    <property type="match status" value="1"/>
</dbReference>
<dbReference type="SMART" id="SM00734">
    <property type="entry name" value="ZnF_Rad18"/>
    <property type="match status" value="1"/>
</dbReference>
<dbReference type="PROSITE" id="PS51908">
    <property type="entry name" value="ZF_UBZ4"/>
    <property type="match status" value="1"/>
</dbReference>
<dbReference type="PROSITE" id="PS00142">
    <property type="entry name" value="ZINC_PROTEASE"/>
    <property type="match status" value="1"/>
</dbReference>
<protein>
    <recommendedName>
        <fullName evidence="8">DNA-dependent metalloprotease SPRTN</fullName>
        <ecNumber evidence="2">3.4.24.-</ecNumber>
    </recommendedName>
    <alternativeName>
        <fullName evidence="2">Protein with SprT-like domain at the N terminus</fullName>
        <shortName evidence="2">Spartan</shortName>
    </alternativeName>
</protein>
<feature type="chain" id="PRO_0000451417" description="DNA-dependent metalloprotease SPRTN">
    <location>
        <begin position="1"/>
        <end position="636"/>
    </location>
</feature>
<feature type="domain" description="SprT-like" evidence="3">
    <location>
        <begin position="76"/>
        <end position="183"/>
    </location>
</feature>
<feature type="zinc finger region" description="UBZ4-type" evidence="4">
    <location>
        <begin position="612"/>
        <end position="636"/>
    </location>
</feature>
<feature type="region of interest" description="Disordered" evidence="6">
    <location>
        <begin position="19"/>
        <end position="42"/>
    </location>
</feature>
<feature type="region of interest" description="Disordered" evidence="6">
    <location>
        <begin position="238"/>
        <end position="382"/>
    </location>
</feature>
<feature type="region of interest" description="Disordered" evidence="6">
    <location>
        <begin position="398"/>
        <end position="430"/>
    </location>
</feature>
<feature type="region of interest" description="Disordered" evidence="6">
    <location>
        <begin position="473"/>
        <end position="608"/>
    </location>
</feature>
<feature type="short sequence motif" description="SHP-box" evidence="2">
    <location>
        <begin position="290"/>
        <end position="298"/>
    </location>
</feature>
<feature type="short sequence motif" description="PIP-box" evidence="2">
    <location>
        <begin position="451"/>
        <end position="458"/>
    </location>
</feature>
<feature type="short sequence motif" description="Nuclear localization signal" evidence="2">
    <location>
        <begin position="535"/>
        <end position="566"/>
    </location>
</feature>
<feature type="compositionally biased region" description="Basic and acidic residues" evidence="6">
    <location>
        <begin position="241"/>
        <end position="268"/>
    </location>
</feature>
<feature type="compositionally biased region" description="Low complexity" evidence="6">
    <location>
        <begin position="272"/>
        <end position="281"/>
    </location>
</feature>
<feature type="compositionally biased region" description="Polar residues" evidence="6">
    <location>
        <begin position="302"/>
        <end position="311"/>
    </location>
</feature>
<feature type="compositionally biased region" description="Pro residues" evidence="6">
    <location>
        <begin position="313"/>
        <end position="327"/>
    </location>
</feature>
<feature type="compositionally biased region" description="Polar residues" evidence="6">
    <location>
        <begin position="341"/>
        <end position="374"/>
    </location>
</feature>
<feature type="compositionally biased region" description="Low complexity" evidence="6">
    <location>
        <begin position="399"/>
        <end position="416"/>
    </location>
</feature>
<feature type="compositionally biased region" description="Polar residues" evidence="6">
    <location>
        <begin position="492"/>
        <end position="523"/>
    </location>
</feature>
<feature type="compositionally biased region" description="Polar residues" evidence="6">
    <location>
        <begin position="545"/>
        <end position="554"/>
    </location>
</feature>
<feature type="compositionally biased region" description="Basic and acidic residues" evidence="6">
    <location>
        <begin position="559"/>
        <end position="570"/>
    </location>
</feature>
<feature type="compositionally biased region" description="Basic and acidic residues" evidence="6">
    <location>
        <begin position="584"/>
        <end position="593"/>
    </location>
</feature>
<feature type="active site" evidence="5">
    <location>
        <position position="142"/>
    </location>
</feature>
<feature type="binding site" evidence="2 5">
    <location>
        <position position="141"/>
    </location>
    <ligand>
        <name>Zn(2+)</name>
        <dbReference type="ChEBI" id="CHEBI:29105"/>
        <label>1</label>
        <note>catalytic</note>
    </ligand>
</feature>
<feature type="binding site" evidence="2 5">
    <location>
        <position position="145"/>
    </location>
    <ligand>
        <name>Zn(2+)</name>
        <dbReference type="ChEBI" id="CHEBI:29105"/>
        <label>1</label>
        <note>catalytic</note>
    </ligand>
</feature>
<feature type="binding site" evidence="2">
    <location>
        <position position="160"/>
    </location>
    <ligand>
        <name>Zn(2+)</name>
        <dbReference type="ChEBI" id="CHEBI:29105"/>
        <label>1</label>
        <note>catalytic</note>
    </ligand>
</feature>
<feature type="binding site" evidence="4">
    <location>
        <position position="615"/>
    </location>
    <ligand>
        <name>Zn(2+)</name>
        <dbReference type="ChEBI" id="CHEBI:29105"/>
        <label>2</label>
    </ligand>
</feature>
<feature type="binding site" evidence="4">
    <location>
        <position position="618"/>
    </location>
    <ligand>
        <name>Zn(2+)</name>
        <dbReference type="ChEBI" id="CHEBI:29105"/>
        <label>2</label>
    </ligand>
</feature>
<feature type="binding site" evidence="4">
    <location>
        <position position="630"/>
    </location>
    <ligand>
        <name>Zn(2+)</name>
        <dbReference type="ChEBI" id="CHEBI:29105"/>
        <label>2</label>
    </ligand>
</feature>
<feature type="binding site" evidence="4">
    <location>
        <position position="634"/>
    </location>
    <ligand>
        <name>Zn(2+)</name>
        <dbReference type="ChEBI" id="CHEBI:29105"/>
        <label>2</label>
    </ligand>
</feature>
<gene>
    <name evidence="9" type="primary">sprtn</name>
</gene>
<accession>A0A0G2L7I0</accession>
<sequence length="636" mass="70224">MMEDEDFLLALRLQEQFDQETPAAGWPDEDCPSSKRRRVDPSGGLDVIPFTQPRAERPLSIVDESWETLDPNPDVRAMFLQFNDKFFWGKLSGVEVKWSPRMTLCAGVCSYEGRGGLCSIRLSEPLLKLRPRKDLVQTLLHEMIHALLFVTQNNRDRDGHGPEFCKHMNRINQASGTNITIYHSFHDEVDVYRQHWWRCNGPCQNRRPFFGYVKRAMNRPPSARDPWWADHQRSCGGTYTKIKEPENYGKTGKSDKQRDKMPATEMPKKSKPPSSTSSSGSQDIRNIIPFSGRGFVLGGNAQIPTNKQIQSPPKAPPEPLHSPPDSPLLPRLQLNEDNLKRLSSGTSNIPRKRSVGNTNAFINVNGSPVRISNGNGSGGKQRSVRDLFQAIVLKSPDRGASAVGSSKSSTDASTADYRSNSALDAKPSGKTSLITDHLSYTISGPKTLSAESNISKYFGGSAKTDVQDSKLKTFGSPQKSAIGTPGYVSKAFGSNQRPDSTSSGIRNTGSPQRSHASATSGSSFKHFRGPAKPESNFPSPRNIGSPRTSGTTPSGAKKRSWEEHNSERVFDYFQRTVGESATSTDKKREEVRSEAPPPVRDQQANNPPAQITVHCPVCHIRLPESTINDHLDSCLL</sequence>
<reference key="1">
    <citation type="journal article" date="2013" name="Nature">
        <title>The zebrafish reference genome sequence and its relationship to the human genome.</title>
        <authorList>
            <person name="Howe K."/>
            <person name="Clark M.D."/>
            <person name="Torroja C.F."/>
            <person name="Torrance J."/>
            <person name="Berthelot C."/>
            <person name="Muffato M."/>
            <person name="Collins J.E."/>
            <person name="Humphray S."/>
            <person name="McLaren K."/>
            <person name="Matthews L."/>
            <person name="McLaren S."/>
            <person name="Sealy I."/>
            <person name="Caccamo M."/>
            <person name="Churcher C."/>
            <person name="Scott C."/>
            <person name="Barrett J.C."/>
            <person name="Koch R."/>
            <person name="Rauch G.J."/>
            <person name="White S."/>
            <person name="Chow W."/>
            <person name="Kilian B."/>
            <person name="Quintais L.T."/>
            <person name="Guerra-Assuncao J.A."/>
            <person name="Zhou Y."/>
            <person name="Gu Y."/>
            <person name="Yen J."/>
            <person name="Vogel J.H."/>
            <person name="Eyre T."/>
            <person name="Redmond S."/>
            <person name="Banerjee R."/>
            <person name="Chi J."/>
            <person name="Fu B."/>
            <person name="Langley E."/>
            <person name="Maguire S.F."/>
            <person name="Laird G.K."/>
            <person name="Lloyd D."/>
            <person name="Kenyon E."/>
            <person name="Donaldson S."/>
            <person name="Sehra H."/>
            <person name="Almeida-King J."/>
            <person name="Loveland J."/>
            <person name="Trevanion S."/>
            <person name="Jones M."/>
            <person name="Quail M."/>
            <person name="Willey D."/>
            <person name="Hunt A."/>
            <person name="Burton J."/>
            <person name="Sims S."/>
            <person name="McLay K."/>
            <person name="Plumb B."/>
            <person name="Davis J."/>
            <person name="Clee C."/>
            <person name="Oliver K."/>
            <person name="Clark R."/>
            <person name="Riddle C."/>
            <person name="Elliot D."/>
            <person name="Threadgold G."/>
            <person name="Harden G."/>
            <person name="Ware D."/>
            <person name="Begum S."/>
            <person name="Mortimore B."/>
            <person name="Kerry G."/>
            <person name="Heath P."/>
            <person name="Phillimore B."/>
            <person name="Tracey A."/>
            <person name="Corby N."/>
            <person name="Dunn M."/>
            <person name="Johnson C."/>
            <person name="Wood J."/>
            <person name="Clark S."/>
            <person name="Pelan S."/>
            <person name="Griffiths G."/>
            <person name="Smith M."/>
            <person name="Glithero R."/>
            <person name="Howden P."/>
            <person name="Barker N."/>
            <person name="Lloyd C."/>
            <person name="Stevens C."/>
            <person name="Harley J."/>
            <person name="Holt K."/>
            <person name="Panagiotidis G."/>
            <person name="Lovell J."/>
            <person name="Beasley H."/>
            <person name="Henderson C."/>
            <person name="Gordon D."/>
            <person name="Auger K."/>
            <person name="Wright D."/>
            <person name="Collins J."/>
            <person name="Raisen C."/>
            <person name="Dyer L."/>
            <person name="Leung K."/>
            <person name="Robertson L."/>
            <person name="Ambridge K."/>
            <person name="Leongamornlert D."/>
            <person name="McGuire S."/>
            <person name="Gilderthorp R."/>
            <person name="Griffiths C."/>
            <person name="Manthravadi D."/>
            <person name="Nichol S."/>
            <person name="Barker G."/>
            <person name="Whitehead S."/>
            <person name="Kay M."/>
            <person name="Brown J."/>
            <person name="Murnane C."/>
            <person name="Gray E."/>
            <person name="Humphries M."/>
            <person name="Sycamore N."/>
            <person name="Barker D."/>
            <person name="Saunders D."/>
            <person name="Wallis J."/>
            <person name="Babbage A."/>
            <person name="Hammond S."/>
            <person name="Mashreghi-Mohammadi M."/>
            <person name="Barr L."/>
            <person name="Martin S."/>
            <person name="Wray P."/>
            <person name="Ellington A."/>
            <person name="Matthews N."/>
            <person name="Ellwood M."/>
            <person name="Woodmansey R."/>
            <person name="Clark G."/>
            <person name="Cooper J."/>
            <person name="Tromans A."/>
            <person name="Grafham D."/>
            <person name="Skuce C."/>
            <person name="Pandian R."/>
            <person name="Andrews R."/>
            <person name="Harrison E."/>
            <person name="Kimberley A."/>
            <person name="Garnett J."/>
            <person name="Fosker N."/>
            <person name="Hall R."/>
            <person name="Garner P."/>
            <person name="Kelly D."/>
            <person name="Bird C."/>
            <person name="Palmer S."/>
            <person name="Gehring I."/>
            <person name="Berger A."/>
            <person name="Dooley C.M."/>
            <person name="Ersan-Urun Z."/>
            <person name="Eser C."/>
            <person name="Geiger H."/>
            <person name="Geisler M."/>
            <person name="Karotki L."/>
            <person name="Kirn A."/>
            <person name="Konantz J."/>
            <person name="Konantz M."/>
            <person name="Oberlander M."/>
            <person name="Rudolph-Geiger S."/>
            <person name="Teucke M."/>
            <person name="Lanz C."/>
            <person name="Raddatz G."/>
            <person name="Osoegawa K."/>
            <person name="Zhu B."/>
            <person name="Rapp A."/>
            <person name="Widaa S."/>
            <person name="Langford C."/>
            <person name="Yang F."/>
            <person name="Schuster S.C."/>
            <person name="Carter N.P."/>
            <person name="Harrow J."/>
            <person name="Ning Z."/>
            <person name="Herrero J."/>
            <person name="Searle S.M."/>
            <person name="Enright A."/>
            <person name="Geisler R."/>
            <person name="Plasterk R.H."/>
            <person name="Lee C."/>
            <person name="Westerfield M."/>
            <person name="de Jong P.J."/>
            <person name="Zon L.I."/>
            <person name="Postlethwait J.H."/>
            <person name="Nusslein-Volhard C."/>
            <person name="Hubbard T.J."/>
            <person name="Roest Crollius H."/>
            <person name="Rogers J."/>
            <person name="Stemple D.L."/>
        </authorList>
    </citation>
    <scope>NUCLEOTIDE SEQUENCE [LARGE SCALE GENOMIC DNA]</scope>
    <source>
        <strain>Tuebingen</strain>
    </source>
</reference>
<reference key="2">
    <citation type="journal article" date="2014" name="Nat. Genet.">
        <title>Mutations in SPRTN cause early onset hepatocellular carcinoma, genomic instability and progeroid features.</title>
        <authorList>
            <person name="Lessel D."/>
            <person name="Vaz B."/>
            <person name="Halder S."/>
            <person name="Lockhart P.J."/>
            <person name="Marinovic-Terzic I."/>
            <person name="Lopez-Mosqueda J."/>
            <person name="Philipp M."/>
            <person name="Sim J.C."/>
            <person name="Smith K.R."/>
            <person name="Oehler J."/>
            <person name="Cabrera E."/>
            <person name="Freire R."/>
            <person name="Pope K."/>
            <person name="Nahid A."/>
            <person name="Norris F."/>
            <person name="Leventer R.J."/>
            <person name="Delatycki M.B."/>
            <person name="Barbi G."/>
            <person name="von Ameln S."/>
            <person name="Hoegel J."/>
            <person name="Degoricija M."/>
            <person name="Fertig R."/>
            <person name="Burkhalter M.D."/>
            <person name="Hofmann K."/>
            <person name="Thiele H."/>
            <person name="Altmueller J."/>
            <person name="Nuernberg G."/>
            <person name="Nuernberg P."/>
            <person name="Bahlo M."/>
            <person name="Martin G.M."/>
            <person name="Aalfs C.M."/>
            <person name="Oshima J."/>
            <person name="Terzic J."/>
            <person name="Amor D.J."/>
            <person name="Dikic I."/>
            <person name="Ramadan K."/>
            <person name="Kubisch C."/>
        </authorList>
    </citation>
    <scope>DISRUPTION PHENOTYPE</scope>
</reference>
<evidence type="ECO:0000250" key="1">
    <source>
        <dbReference type="UniProtKB" id="A0A1L8G2K9"/>
    </source>
</evidence>
<evidence type="ECO:0000250" key="2">
    <source>
        <dbReference type="UniProtKB" id="Q9H040"/>
    </source>
</evidence>
<evidence type="ECO:0000255" key="3"/>
<evidence type="ECO:0000255" key="4">
    <source>
        <dbReference type="PROSITE-ProRule" id="PRU01256"/>
    </source>
</evidence>
<evidence type="ECO:0000255" key="5">
    <source>
        <dbReference type="PROSITE-ProRule" id="PRU10095"/>
    </source>
</evidence>
<evidence type="ECO:0000256" key="6">
    <source>
        <dbReference type="SAM" id="MobiDB-lite"/>
    </source>
</evidence>
<evidence type="ECO:0000269" key="7">
    <source>
    </source>
</evidence>
<evidence type="ECO:0000305" key="8"/>
<evidence type="ECO:0000312" key="9">
    <source>
        <dbReference type="ZFIN" id="ZDB-GENE-170317-1"/>
    </source>
</evidence>
<comment type="function">
    <text evidence="1 2">DNA-dependent metalloendopeptidase that mediates the proteolytic cleavage of covalent DNA-protein cross-links (DPCs) during DNA synthesis, thereby playing a key role in maintaining genomic integrity. DPCs are highly toxic DNA lesions that interfere with essential chromatin transactions, such as replication and transcription, and which are induced by reactive agents, such as UV light or formaldehyde. Associates with the DNA replication machinery and specifically removes DPCs during DNA synthesis. Catalyzes proteolytic cleavage of the hmces DNA-protein cross-link following unfolding by the brip1/fancj helicase. Acts as a pleiotropic protease for DNA-binding proteins cross-linked with DNA, such as top1, top2a, histones H3 and H4. Mediates degradation of DPCs that are not ubiquitinated, while it is not able to degrade ubiquitinated DPCs. SPRTN activation requires polymerase collision with DPCs followed by helicase bypass of DPCs. May also act as a 'reader' of ubiquitinated pcna: facilitates chromatin association of rad18 and is required for efficient pcna monoubiquitination, promoting a feed-forward loop to enhance pcna ubiquitination and translesion DNA synthesis. Acts as a regulator of translesion DNA synthesis by recruiting vcp/p97 to sites of DNA damage.</text>
</comment>
<comment type="cofactor">
    <cofactor evidence="2">
        <name>Zn(2+)</name>
        <dbReference type="ChEBI" id="CHEBI:29105"/>
    </cofactor>
</comment>
<comment type="activity regulation">
    <text evidence="2">DNA-binding activates the protease activity: single-stranded DNA-binding specifically activates ability to cleave covalent DNA-protein cross-links (DPCs). In contrast, double-stranded DNA-binding specifically activates autocatalytic cleavage, and subsequent inactivation.</text>
</comment>
<comment type="subunit">
    <text evidence="2">Homodimer.</text>
</comment>
<comment type="subcellular location">
    <subcellularLocation>
        <location evidence="2">Nucleus</location>
    </subcellularLocation>
    <subcellularLocation>
        <location evidence="1">Chromosome</location>
    </subcellularLocation>
    <text evidence="2">Localizes to sites of UV damage via the PIP-box. Recruited to stalled replication forks at sites of replication stress.</text>
</comment>
<comment type="domain">
    <text evidence="2">The UBZ4-type zinc fingers mediate binding to 'Lys-48'- and 'Lys-63'-linked polyubiquitin.</text>
</comment>
<comment type="PTM">
    <text evidence="2">Autocatalytically cleaved in response to double-stranded DNA-binding: autocatalytic cleavage takes place in trans and leads to inactivation.</text>
</comment>
<comment type="disruption phenotype">
    <text evidence="7">Morpholino knockdown of the protein causes severe development defects and accumulation of DNA damage.</text>
</comment>
<comment type="similarity">
    <text evidence="8">Belongs to the Spartan family.</text>
</comment>
<proteinExistence type="inferred from homology"/>
<name>SPRTN_DANRE</name>
<organism>
    <name type="scientific">Danio rerio</name>
    <name type="common">Zebrafish</name>
    <name type="synonym">Brachydanio rerio</name>
    <dbReference type="NCBI Taxonomy" id="7955"/>
    <lineage>
        <taxon>Eukaryota</taxon>
        <taxon>Metazoa</taxon>
        <taxon>Chordata</taxon>
        <taxon>Craniata</taxon>
        <taxon>Vertebrata</taxon>
        <taxon>Euteleostomi</taxon>
        <taxon>Actinopterygii</taxon>
        <taxon>Neopterygii</taxon>
        <taxon>Teleostei</taxon>
        <taxon>Ostariophysi</taxon>
        <taxon>Cypriniformes</taxon>
        <taxon>Danionidae</taxon>
        <taxon>Danioninae</taxon>
        <taxon>Danio</taxon>
    </lineage>
</organism>
<keyword id="KW-0068">Autocatalytic cleavage</keyword>
<keyword id="KW-0158">Chromosome</keyword>
<keyword id="KW-0227">DNA damage</keyword>
<keyword id="KW-0234">DNA repair</keyword>
<keyword id="KW-0378">Hydrolase</keyword>
<keyword id="KW-1017">Isopeptide bond</keyword>
<keyword id="KW-0479">Metal-binding</keyword>
<keyword id="KW-0482">Metalloprotease</keyword>
<keyword id="KW-0539">Nucleus</keyword>
<keyword id="KW-0645">Protease</keyword>
<keyword id="KW-1185">Reference proteome</keyword>
<keyword id="KW-0862">Zinc</keyword>
<keyword id="KW-0863">Zinc-finger</keyword>